<accession>B2I0Y7</accession>
<feature type="chain" id="PRO_1000095326" description="Arginine--tRNA ligase">
    <location>
        <begin position="1"/>
        <end position="596"/>
    </location>
</feature>
<feature type="short sequence motif" description="'HIGH' region">
    <location>
        <begin position="128"/>
        <end position="138"/>
    </location>
</feature>
<dbReference type="EC" id="6.1.1.19" evidence="1"/>
<dbReference type="EMBL" id="CP000863">
    <property type="protein sequence ID" value="ACC55475.1"/>
    <property type="molecule type" value="Genomic_DNA"/>
</dbReference>
<dbReference type="RefSeq" id="WP_001090284.1">
    <property type="nucleotide sequence ID" value="NZ_CP031380.1"/>
</dbReference>
<dbReference type="SMR" id="B2I0Y7"/>
<dbReference type="GeneID" id="92892152"/>
<dbReference type="KEGG" id="abc:ACICU_00163"/>
<dbReference type="HOGENOM" id="CLU_006406_0_1_6"/>
<dbReference type="Proteomes" id="UP000008839">
    <property type="component" value="Chromosome"/>
</dbReference>
<dbReference type="GO" id="GO:0005737">
    <property type="term" value="C:cytoplasm"/>
    <property type="evidence" value="ECO:0007669"/>
    <property type="project" value="UniProtKB-SubCell"/>
</dbReference>
<dbReference type="GO" id="GO:0004814">
    <property type="term" value="F:arginine-tRNA ligase activity"/>
    <property type="evidence" value="ECO:0007669"/>
    <property type="project" value="UniProtKB-UniRule"/>
</dbReference>
<dbReference type="GO" id="GO:0005524">
    <property type="term" value="F:ATP binding"/>
    <property type="evidence" value="ECO:0007669"/>
    <property type="project" value="UniProtKB-UniRule"/>
</dbReference>
<dbReference type="GO" id="GO:0006420">
    <property type="term" value="P:arginyl-tRNA aminoacylation"/>
    <property type="evidence" value="ECO:0007669"/>
    <property type="project" value="UniProtKB-UniRule"/>
</dbReference>
<dbReference type="CDD" id="cd00671">
    <property type="entry name" value="ArgRS_core"/>
    <property type="match status" value="1"/>
</dbReference>
<dbReference type="FunFam" id="1.10.730.10:FF:000008">
    <property type="entry name" value="Arginine--tRNA ligase"/>
    <property type="match status" value="1"/>
</dbReference>
<dbReference type="Gene3D" id="3.30.1360.70">
    <property type="entry name" value="Arginyl tRNA synthetase N-terminal domain"/>
    <property type="match status" value="1"/>
</dbReference>
<dbReference type="Gene3D" id="3.40.50.620">
    <property type="entry name" value="HUPs"/>
    <property type="match status" value="1"/>
</dbReference>
<dbReference type="Gene3D" id="1.10.730.10">
    <property type="entry name" value="Isoleucyl-tRNA Synthetase, Domain 1"/>
    <property type="match status" value="1"/>
</dbReference>
<dbReference type="HAMAP" id="MF_00123">
    <property type="entry name" value="Arg_tRNA_synth"/>
    <property type="match status" value="1"/>
</dbReference>
<dbReference type="InterPro" id="IPR001278">
    <property type="entry name" value="Arg-tRNA-ligase"/>
</dbReference>
<dbReference type="InterPro" id="IPR005148">
    <property type="entry name" value="Arg-tRNA-synth_N"/>
</dbReference>
<dbReference type="InterPro" id="IPR036695">
    <property type="entry name" value="Arg-tRNA-synth_N_sf"/>
</dbReference>
<dbReference type="InterPro" id="IPR035684">
    <property type="entry name" value="ArgRS_core"/>
</dbReference>
<dbReference type="InterPro" id="IPR008909">
    <property type="entry name" value="DALR_anticod-bd"/>
</dbReference>
<dbReference type="InterPro" id="IPR014729">
    <property type="entry name" value="Rossmann-like_a/b/a_fold"/>
</dbReference>
<dbReference type="InterPro" id="IPR009080">
    <property type="entry name" value="tRNAsynth_Ia_anticodon-bd"/>
</dbReference>
<dbReference type="NCBIfam" id="TIGR00456">
    <property type="entry name" value="argS"/>
    <property type="match status" value="1"/>
</dbReference>
<dbReference type="PANTHER" id="PTHR11956:SF5">
    <property type="entry name" value="ARGININE--TRNA LIGASE, CYTOPLASMIC"/>
    <property type="match status" value="1"/>
</dbReference>
<dbReference type="PANTHER" id="PTHR11956">
    <property type="entry name" value="ARGINYL-TRNA SYNTHETASE"/>
    <property type="match status" value="1"/>
</dbReference>
<dbReference type="Pfam" id="PF03485">
    <property type="entry name" value="Arg_tRNA_synt_N"/>
    <property type="match status" value="1"/>
</dbReference>
<dbReference type="Pfam" id="PF05746">
    <property type="entry name" value="DALR_1"/>
    <property type="match status" value="1"/>
</dbReference>
<dbReference type="Pfam" id="PF00750">
    <property type="entry name" value="tRNA-synt_1d"/>
    <property type="match status" value="2"/>
</dbReference>
<dbReference type="PRINTS" id="PR01038">
    <property type="entry name" value="TRNASYNTHARG"/>
</dbReference>
<dbReference type="SMART" id="SM01016">
    <property type="entry name" value="Arg_tRNA_synt_N"/>
    <property type="match status" value="1"/>
</dbReference>
<dbReference type="SMART" id="SM00836">
    <property type="entry name" value="DALR_1"/>
    <property type="match status" value="1"/>
</dbReference>
<dbReference type="SUPFAM" id="SSF47323">
    <property type="entry name" value="Anticodon-binding domain of a subclass of class I aminoacyl-tRNA synthetases"/>
    <property type="match status" value="1"/>
</dbReference>
<dbReference type="SUPFAM" id="SSF55190">
    <property type="entry name" value="Arginyl-tRNA synthetase (ArgRS), N-terminal 'additional' domain"/>
    <property type="match status" value="1"/>
</dbReference>
<dbReference type="SUPFAM" id="SSF52374">
    <property type="entry name" value="Nucleotidylyl transferase"/>
    <property type="match status" value="1"/>
</dbReference>
<gene>
    <name evidence="1" type="primary">argS</name>
    <name type="ordered locus">ACICU_00163</name>
</gene>
<evidence type="ECO:0000255" key="1">
    <source>
        <dbReference type="HAMAP-Rule" id="MF_00123"/>
    </source>
</evidence>
<reference key="1">
    <citation type="journal article" date="2008" name="Antimicrob. Agents Chemother.">
        <title>Whole-genome pyrosequencing of an epidemic multidrug-resistant Acinetobacter baumannii strain belonging to the European clone II group.</title>
        <authorList>
            <person name="Iacono M."/>
            <person name="Villa L."/>
            <person name="Fortini D."/>
            <person name="Bordoni R."/>
            <person name="Imperi F."/>
            <person name="Bonnal R.J."/>
            <person name="Sicheritz-Ponten T."/>
            <person name="De Bellis G."/>
            <person name="Visca P."/>
            <person name="Cassone A."/>
            <person name="Carattoli A."/>
        </authorList>
    </citation>
    <scope>NUCLEOTIDE SEQUENCE [LARGE SCALE GENOMIC DNA]</scope>
    <source>
        <strain>ACICU</strain>
    </source>
</reference>
<name>SYR_ACIBC</name>
<comment type="catalytic activity">
    <reaction evidence="1">
        <text>tRNA(Arg) + L-arginine + ATP = L-arginyl-tRNA(Arg) + AMP + diphosphate</text>
        <dbReference type="Rhea" id="RHEA:20301"/>
        <dbReference type="Rhea" id="RHEA-COMP:9658"/>
        <dbReference type="Rhea" id="RHEA-COMP:9673"/>
        <dbReference type="ChEBI" id="CHEBI:30616"/>
        <dbReference type="ChEBI" id="CHEBI:32682"/>
        <dbReference type="ChEBI" id="CHEBI:33019"/>
        <dbReference type="ChEBI" id="CHEBI:78442"/>
        <dbReference type="ChEBI" id="CHEBI:78513"/>
        <dbReference type="ChEBI" id="CHEBI:456215"/>
        <dbReference type="EC" id="6.1.1.19"/>
    </reaction>
</comment>
<comment type="subunit">
    <text evidence="1">Monomer.</text>
</comment>
<comment type="subcellular location">
    <subcellularLocation>
        <location evidence="1">Cytoplasm</location>
    </subcellularLocation>
</comment>
<comment type="similarity">
    <text evidence="1">Belongs to the class-I aminoacyl-tRNA synthetase family.</text>
</comment>
<protein>
    <recommendedName>
        <fullName evidence="1">Arginine--tRNA ligase</fullName>
        <ecNumber evidence="1">6.1.1.19</ecNumber>
    </recommendedName>
    <alternativeName>
        <fullName evidence="1">Arginyl-tRNA synthetase</fullName>
        <shortName evidence="1">ArgRS</shortName>
    </alternativeName>
</protein>
<sequence length="596" mass="66306">MNTAIQAALDHAVQTLQQEGVLPSDWNNSSNLTRTKDRSHGDFASNIAMIGSKAAGMKPRDLAEKILAALPEVADISKAEIAGPGFINFFLNADQRFAILDQIQAQKESFGRSQSNAAKKIQVEFVSANPTSSLHVGHGRGAAYGMTVANLLEATGAKVDREYYVNDAGRQMDILATSTYLRYLELLGQNLVFPKNAYQGDYVKEIAQGIIDKDGDAYVREVANVYKDVPEDVQYAEELDSEGNKVVLSGDKEKHIDGLIANSQQLLGEGYRVFHQAALHAILDDIKDDLADFGVTFNQWFSEASLSAKIDEALETLDQRGFLYEKDGNIWFKSTEFGDEKDRVVKRRNGQTTYFASDIAYHLNKLQRGYTDLVDIWGSDHHGYISRVKAAIDAMGYDSKKLTVLLVQFVSLWRGGEMVQMSSRSGQFVTLRDLRKEVGNDAARFYYVMRKSEQHIDFDLDLAVSQSKDNAVYYIQYAHARICRMLEKAASTGLQFEVSAARSHAARLSLDAETEILAKLAAYPDVVLRAANAYEPHQVGNYLKELAALFHGWYNEHKVLSDDAELTQARLLLSINVQQVLRNGLELLGVSAPEAM</sequence>
<keyword id="KW-0030">Aminoacyl-tRNA synthetase</keyword>
<keyword id="KW-0067">ATP-binding</keyword>
<keyword id="KW-0963">Cytoplasm</keyword>
<keyword id="KW-0436">Ligase</keyword>
<keyword id="KW-0547">Nucleotide-binding</keyword>
<keyword id="KW-0648">Protein biosynthesis</keyword>
<organism>
    <name type="scientific">Acinetobacter baumannii (strain ACICU)</name>
    <dbReference type="NCBI Taxonomy" id="405416"/>
    <lineage>
        <taxon>Bacteria</taxon>
        <taxon>Pseudomonadati</taxon>
        <taxon>Pseudomonadota</taxon>
        <taxon>Gammaproteobacteria</taxon>
        <taxon>Moraxellales</taxon>
        <taxon>Moraxellaceae</taxon>
        <taxon>Acinetobacter</taxon>
        <taxon>Acinetobacter calcoaceticus/baumannii complex</taxon>
    </lineage>
</organism>
<proteinExistence type="inferred from homology"/>